<proteinExistence type="evidence at transcript level"/>
<gene>
    <name type="primary">fadM</name>
    <name type="synonym">yusM</name>
    <name type="ordered locus">BSU32850</name>
</gene>
<accession>O32179</accession>
<feature type="chain" id="PRO_0000360508" description="Proline dehydrogenase 1">
    <location>
        <begin position="1"/>
        <end position="302"/>
    </location>
</feature>
<feature type="active site" evidence="2">
    <location>
        <position position="129"/>
    </location>
</feature>
<feature type="active site" evidence="2">
    <location>
        <position position="179"/>
    </location>
</feature>
<feature type="binding site" evidence="4">
    <location>
        <position position="95"/>
    </location>
    <ligand>
        <name>substrate</name>
    </ligand>
</feature>
<feature type="binding site" evidence="2">
    <location>
        <position position="130"/>
    </location>
    <ligand>
        <name>FAD</name>
        <dbReference type="ChEBI" id="CHEBI:57692"/>
    </ligand>
</feature>
<feature type="binding site" evidence="2">
    <location>
        <position position="158"/>
    </location>
    <ligand>
        <name>FAD</name>
        <dbReference type="ChEBI" id="CHEBI:57692"/>
    </ligand>
</feature>
<feature type="binding site" evidence="2">
    <location>
        <begin position="182"/>
        <end position="184"/>
    </location>
    <ligand>
        <name>FAD</name>
        <dbReference type="ChEBI" id="CHEBI:57692"/>
    </ligand>
</feature>
<feature type="binding site" evidence="2">
    <location>
        <begin position="221"/>
        <end position="222"/>
    </location>
    <ligand>
        <name>FAD</name>
        <dbReference type="ChEBI" id="CHEBI:57692"/>
    </ligand>
</feature>
<feature type="binding site" evidence="4">
    <location>
        <begin position="283"/>
        <end position="284"/>
    </location>
    <ligand>
        <name>substrate</name>
    </ligand>
</feature>
<feature type="site" description="Critical for catalytic activity" evidence="2">
    <location>
        <position position="270"/>
    </location>
</feature>
<sequence>MLRHVFLFLSQNKTLTKFAKAYGTRLGARRFVAGDTIESAVKTVKRLNRSGLCATIDYLGEYAASEKEANQVAEECKKAIQAIAEHQLNSELSLKLTSIGLDLSEELALTHLRAILSVAKQYDVAVTIDMEDYSHYEQTLSIYRQCKQEFEKLGTVIQAYLYRAAEDIRKMRDLKPNLRLVKGAYKESAAVAFPDKRGTDLHFQSLIKLQLLSGNYTAVATHDDDIIAFTKQLVAEHQIPASQFEFQMLYGIRPERQKELAKEGYRMRVYVPYGTDWFSYFMRRIAERPANAAFVLKGILKK</sequence>
<evidence type="ECO:0000250" key="1"/>
<evidence type="ECO:0000250" key="2">
    <source>
        <dbReference type="UniProtKB" id="Q72IB8"/>
    </source>
</evidence>
<evidence type="ECO:0000250" key="3">
    <source>
        <dbReference type="UniProtKB" id="Q8RMG1"/>
    </source>
</evidence>
<evidence type="ECO:0000250" key="4">
    <source>
        <dbReference type="UniProtKB" id="Q9RW55"/>
    </source>
</evidence>
<evidence type="ECO:0000269" key="5">
    <source>
    </source>
</evidence>
<evidence type="ECO:0000305" key="6"/>
<organism>
    <name type="scientific">Bacillus subtilis (strain 168)</name>
    <dbReference type="NCBI Taxonomy" id="224308"/>
    <lineage>
        <taxon>Bacteria</taxon>
        <taxon>Bacillati</taxon>
        <taxon>Bacillota</taxon>
        <taxon>Bacilli</taxon>
        <taxon>Bacillales</taxon>
        <taxon>Bacillaceae</taxon>
        <taxon>Bacillus</taxon>
    </lineage>
</organism>
<keyword id="KW-0274">FAD</keyword>
<keyword id="KW-0285">Flavoprotein</keyword>
<keyword id="KW-0547">Nucleotide-binding</keyword>
<keyword id="KW-0560">Oxidoreductase</keyword>
<keyword id="KW-0642">Proline metabolism</keyword>
<keyword id="KW-1185">Reference proteome</keyword>
<protein>
    <recommendedName>
        <fullName>Proline dehydrogenase 1</fullName>
        <shortName>PRODH 1</shortName>
        <ecNumber>1.5.5.2</ecNumber>
    </recommendedName>
    <alternativeName>
        <fullName>Proline oxidase 1</fullName>
    </alternativeName>
</protein>
<dbReference type="EC" id="1.5.5.2"/>
<dbReference type="EMBL" id="AL009126">
    <property type="protein sequence ID" value="CAB15274.1"/>
    <property type="molecule type" value="Genomic_DNA"/>
</dbReference>
<dbReference type="PIR" id="F70021">
    <property type="entry name" value="F70021"/>
</dbReference>
<dbReference type="RefSeq" id="WP_003228569.1">
    <property type="nucleotide sequence ID" value="NZ_OZ025638.1"/>
</dbReference>
<dbReference type="SMR" id="O32179"/>
<dbReference type="FunCoup" id="O32179">
    <property type="interactions" value="74"/>
</dbReference>
<dbReference type="STRING" id="224308.BSU32850"/>
<dbReference type="PaxDb" id="224308-BSU32850"/>
<dbReference type="EnsemblBacteria" id="CAB15274">
    <property type="protein sequence ID" value="CAB15274"/>
    <property type="gene ID" value="BSU_32850"/>
</dbReference>
<dbReference type="GeneID" id="937064"/>
<dbReference type="KEGG" id="bsu:BSU32850"/>
<dbReference type="PATRIC" id="fig|224308.179.peg.3560"/>
<dbReference type="eggNOG" id="COG0506">
    <property type="taxonomic scope" value="Bacteria"/>
</dbReference>
<dbReference type="InParanoid" id="O32179"/>
<dbReference type="OrthoDB" id="9773461at2"/>
<dbReference type="PhylomeDB" id="O32179"/>
<dbReference type="BioCyc" id="BSUB:BSU32850-MONOMER"/>
<dbReference type="UniPathway" id="UPA00261">
    <property type="reaction ID" value="UER00373"/>
</dbReference>
<dbReference type="Proteomes" id="UP000001570">
    <property type="component" value="Chromosome"/>
</dbReference>
<dbReference type="GO" id="GO:0071949">
    <property type="term" value="F:FAD binding"/>
    <property type="evidence" value="ECO:0000250"/>
    <property type="project" value="UniProtKB"/>
</dbReference>
<dbReference type="GO" id="GO:0004657">
    <property type="term" value="F:proline dehydrogenase activity"/>
    <property type="evidence" value="ECO:0000250"/>
    <property type="project" value="UniProtKB"/>
</dbReference>
<dbReference type="GO" id="GO:0006562">
    <property type="term" value="P:proline catabolic process"/>
    <property type="evidence" value="ECO:0000250"/>
    <property type="project" value="UniProtKB"/>
</dbReference>
<dbReference type="GO" id="GO:0010133">
    <property type="term" value="P:proline catabolic process to glutamate"/>
    <property type="evidence" value="ECO:0007669"/>
    <property type="project" value="UniProtKB-UniPathway"/>
</dbReference>
<dbReference type="FunFam" id="3.20.20.220:FF:000026">
    <property type="entry name" value="Proline dehydrogenase 1"/>
    <property type="match status" value="1"/>
</dbReference>
<dbReference type="Gene3D" id="3.20.20.220">
    <property type="match status" value="1"/>
</dbReference>
<dbReference type="InterPro" id="IPR029041">
    <property type="entry name" value="FAD-linked_oxidoreductase-like"/>
</dbReference>
<dbReference type="InterPro" id="IPR008219">
    <property type="entry name" value="PRODH_bac_arc"/>
</dbReference>
<dbReference type="InterPro" id="IPR002872">
    <property type="entry name" value="Proline_DH_dom"/>
</dbReference>
<dbReference type="InterPro" id="IPR015659">
    <property type="entry name" value="Proline_oxidase"/>
</dbReference>
<dbReference type="PANTHER" id="PTHR13914:SF0">
    <property type="entry name" value="PROLINE DEHYDROGENASE 1, MITOCHONDRIAL"/>
    <property type="match status" value="1"/>
</dbReference>
<dbReference type="PANTHER" id="PTHR13914">
    <property type="entry name" value="PROLINE OXIDASE"/>
    <property type="match status" value="1"/>
</dbReference>
<dbReference type="Pfam" id="PF01619">
    <property type="entry name" value="Pro_dh"/>
    <property type="match status" value="1"/>
</dbReference>
<dbReference type="PIRSF" id="PIRSF000196">
    <property type="entry name" value="Pro_dehydrog"/>
    <property type="match status" value="1"/>
</dbReference>
<dbReference type="SUPFAM" id="SSF51730">
    <property type="entry name" value="FAD-linked oxidoreductase"/>
    <property type="match status" value="1"/>
</dbReference>
<name>PROD1_BACSU</name>
<comment type="function">
    <text evidence="3">Converts proline to delta-1-pyrroline-5-carboxylate.</text>
</comment>
<comment type="catalytic activity">
    <reaction>
        <text>L-proline + a quinone = (S)-1-pyrroline-5-carboxylate + a quinol + H(+)</text>
        <dbReference type="Rhea" id="RHEA:23784"/>
        <dbReference type="ChEBI" id="CHEBI:15378"/>
        <dbReference type="ChEBI" id="CHEBI:17388"/>
        <dbReference type="ChEBI" id="CHEBI:24646"/>
        <dbReference type="ChEBI" id="CHEBI:60039"/>
        <dbReference type="ChEBI" id="CHEBI:132124"/>
        <dbReference type="EC" id="1.5.5.2"/>
    </reaction>
</comment>
<comment type="cofactor">
    <cofactor evidence="1">
        <name>FAD</name>
        <dbReference type="ChEBI" id="CHEBI:57692"/>
    </cofactor>
</comment>
<comment type="pathway">
    <text>Amino-acid degradation; L-proline degradation into L-glutamate; L-glutamate from L-proline: step 1/2.</text>
</comment>
<comment type="induction">
    <text evidence="5">Repressed by FadR in the absence of LCFAs (fatty acids of 14-20 carbon atoms). When LCFAs are present in the medium, they are converted to long-chain acyl-CoAs, which antagonize fadR as to its binding to fadR boxes on target DNA and thus derepress transcription.</text>
</comment>
<comment type="similarity">
    <text evidence="6">Belongs to the proline dehydrogenase family.</text>
</comment>
<reference key="1">
    <citation type="journal article" date="1997" name="Nature">
        <title>The complete genome sequence of the Gram-positive bacterium Bacillus subtilis.</title>
        <authorList>
            <person name="Kunst F."/>
            <person name="Ogasawara N."/>
            <person name="Moszer I."/>
            <person name="Albertini A.M."/>
            <person name="Alloni G."/>
            <person name="Azevedo V."/>
            <person name="Bertero M.G."/>
            <person name="Bessieres P."/>
            <person name="Bolotin A."/>
            <person name="Borchert S."/>
            <person name="Borriss R."/>
            <person name="Boursier L."/>
            <person name="Brans A."/>
            <person name="Braun M."/>
            <person name="Brignell S.C."/>
            <person name="Bron S."/>
            <person name="Brouillet S."/>
            <person name="Bruschi C.V."/>
            <person name="Caldwell B."/>
            <person name="Capuano V."/>
            <person name="Carter N.M."/>
            <person name="Choi S.-K."/>
            <person name="Codani J.-J."/>
            <person name="Connerton I.F."/>
            <person name="Cummings N.J."/>
            <person name="Daniel R.A."/>
            <person name="Denizot F."/>
            <person name="Devine K.M."/>
            <person name="Duesterhoeft A."/>
            <person name="Ehrlich S.D."/>
            <person name="Emmerson P.T."/>
            <person name="Entian K.-D."/>
            <person name="Errington J."/>
            <person name="Fabret C."/>
            <person name="Ferrari E."/>
            <person name="Foulger D."/>
            <person name="Fritz C."/>
            <person name="Fujita M."/>
            <person name="Fujita Y."/>
            <person name="Fuma S."/>
            <person name="Galizzi A."/>
            <person name="Galleron N."/>
            <person name="Ghim S.-Y."/>
            <person name="Glaser P."/>
            <person name="Goffeau A."/>
            <person name="Golightly E.J."/>
            <person name="Grandi G."/>
            <person name="Guiseppi G."/>
            <person name="Guy B.J."/>
            <person name="Haga K."/>
            <person name="Haiech J."/>
            <person name="Harwood C.R."/>
            <person name="Henaut A."/>
            <person name="Hilbert H."/>
            <person name="Holsappel S."/>
            <person name="Hosono S."/>
            <person name="Hullo M.-F."/>
            <person name="Itaya M."/>
            <person name="Jones L.-M."/>
            <person name="Joris B."/>
            <person name="Karamata D."/>
            <person name="Kasahara Y."/>
            <person name="Klaerr-Blanchard M."/>
            <person name="Klein C."/>
            <person name="Kobayashi Y."/>
            <person name="Koetter P."/>
            <person name="Koningstein G."/>
            <person name="Krogh S."/>
            <person name="Kumano M."/>
            <person name="Kurita K."/>
            <person name="Lapidus A."/>
            <person name="Lardinois S."/>
            <person name="Lauber J."/>
            <person name="Lazarevic V."/>
            <person name="Lee S.-M."/>
            <person name="Levine A."/>
            <person name="Liu H."/>
            <person name="Masuda S."/>
            <person name="Mauel C."/>
            <person name="Medigue C."/>
            <person name="Medina N."/>
            <person name="Mellado R.P."/>
            <person name="Mizuno M."/>
            <person name="Moestl D."/>
            <person name="Nakai S."/>
            <person name="Noback M."/>
            <person name="Noone D."/>
            <person name="O'Reilly M."/>
            <person name="Ogawa K."/>
            <person name="Ogiwara A."/>
            <person name="Oudega B."/>
            <person name="Park S.-H."/>
            <person name="Parro V."/>
            <person name="Pohl T.M."/>
            <person name="Portetelle D."/>
            <person name="Porwollik S."/>
            <person name="Prescott A.M."/>
            <person name="Presecan E."/>
            <person name="Pujic P."/>
            <person name="Purnelle B."/>
            <person name="Rapoport G."/>
            <person name="Rey M."/>
            <person name="Reynolds S."/>
            <person name="Rieger M."/>
            <person name="Rivolta C."/>
            <person name="Rocha E."/>
            <person name="Roche B."/>
            <person name="Rose M."/>
            <person name="Sadaie Y."/>
            <person name="Sato T."/>
            <person name="Scanlan E."/>
            <person name="Schleich S."/>
            <person name="Schroeter R."/>
            <person name="Scoffone F."/>
            <person name="Sekiguchi J."/>
            <person name="Sekowska A."/>
            <person name="Seror S.J."/>
            <person name="Serror P."/>
            <person name="Shin B.-S."/>
            <person name="Soldo B."/>
            <person name="Sorokin A."/>
            <person name="Tacconi E."/>
            <person name="Takagi T."/>
            <person name="Takahashi H."/>
            <person name="Takemaru K."/>
            <person name="Takeuchi M."/>
            <person name="Tamakoshi A."/>
            <person name="Tanaka T."/>
            <person name="Terpstra P."/>
            <person name="Tognoni A."/>
            <person name="Tosato V."/>
            <person name="Uchiyama S."/>
            <person name="Vandenbol M."/>
            <person name="Vannier F."/>
            <person name="Vassarotti A."/>
            <person name="Viari A."/>
            <person name="Wambutt R."/>
            <person name="Wedler E."/>
            <person name="Wedler H."/>
            <person name="Weitzenegger T."/>
            <person name="Winters P."/>
            <person name="Wipat A."/>
            <person name="Yamamoto H."/>
            <person name="Yamane K."/>
            <person name="Yasumoto K."/>
            <person name="Yata K."/>
            <person name="Yoshida K."/>
            <person name="Yoshikawa H.-F."/>
            <person name="Zumstein E."/>
            <person name="Yoshikawa H."/>
            <person name="Danchin A."/>
        </authorList>
    </citation>
    <scope>NUCLEOTIDE SEQUENCE [LARGE SCALE GENOMIC DNA]</scope>
    <source>
        <strain>168</strain>
    </source>
</reference>
<reference key="2">
    <citation type="journal article" date="2007" name="J. Biol. Chem.">
        <title>Organization and function of the YsiA regulon of Bacillus subtilis involved in fatty acid degradation.</title>
        <authorList>
            <person name="Matsuoka H."/>
            <person name="Hirooka K."/>
            <person name="Fujita Y."/>
        </authorList>
    </citation>
    <scope>GENE NAME</scope>
    <scope>INDUCTION</scope>
    <source>
        <strain>168</strain>
    </source>
</reference>